<keyword id="KW-0997">Cell inner membrane</keyword>
<keyword id="KW-1003">Cell membrane</keyword>
<keyword id="KW-0472">Membrane</keyword>
<keyword id="KW-0571">Peptide transport</keyword>
<keyword id="KW-0653">Protein transport</keyword>
<keyword id="KW-1185">Reference proteome</keyword>
<keyword id="KW-0812">Transmembrane</keyword>
<keyword id="KW-1133">Transmembrane helix</keyword>
<keyword id="KW-0813">Transport</keyword>
<dbReference type="EMBL" id="AE000516">
    <property type="protein sequence ID" value="AAK45580.1"/>
    <property type="molecule type" value="Genomic_DNA"/>
</dbReference>
<dbReference type="PIR" id="D70729">
    <property type="entry name" value="D70729"/>
</dbReference>
<dbReference type="RefSeq" id="WP_003406607.1">
    <property type="nucleotide sequence ID" value="NZ_KK341227.1"/>
</dbReference>
<dbReference type="SMR" id="P9WFZ8"/>
<dbReference type="KEGG" id="mtc:MT1319"/>
<dbReference type="PATRIC" id="fig|83331.31.peg.1425"/>
<dbReference type="HOGENOM" id="CLU_028518_1_3_11"/>
<dbReference type="Proteomes" id="UP000001020">
    <property type="component" value="Chromosome"/>
</dbReference>
<dbReference type="GO" id="GO:0005886">
    <property type="term" value="C:plasma membrane"/>
    <property type="evidence" value="ECO:0007669"/>
    <property type="project" value="UniProtKB-SubCell"/>
</dbReference>
<dbReference type="GO" id="GO:0015833">
    <property type="term" value="P:peptide transport"/>
    <property type="evidence" value="ECO:0007669"/>
    <property type="project" value="UniProtKB-KW"/>
</dbReference>
<dbReference type="GO" id="GO:0015031">
    <property type="term" value="P:protein transport"/>
    <property type="evidence" value="ECO:0007669"/>
    <property type="project" value="UniProtKB-KW"/>
</dbReference>
<dbReference type="GO" id="GO:0055085">
    <property type="term" value="P:transmembrane transport"/>
    <property type="evidence" value="ECO:0007669"/>
    <property type="project" value="InterPro"/>
</dbReference>
<dbReference type="CDD" id="cd06261">
    <property type="entry name" value="TM_PBP2"/>
    <property type="match status" value="1"/>
</dbReference>
<dbReference type="FunFam" id="1.10.3720.10:FF:000102">
    <property type="entry name" value="Oligopeptide ABC transporter permease OppC"/>
    <property type="match status" value="1"/>
</dbReference>
<dbReference type="Gene3D" id="1.10.3720.10">
    <property type="entry name" value="MetI-like"/>
    <property type="match status" value="1"/>
</dbReference>
<dbReference type="InterPro" id="IPR050366">
    <property type="entry name" value="BP-dependent_transpt_permease"/>
</dbReference>
<dbReference type="InterPro" id="IPR000515">
    <property type="entry name" value="MetI-like"/>
</dbReference>
<dbReference type="InterPro" id="IPR035906">
    <property type="entry name" value="MetI-like_sf"/>
</dbReference>
<dbReference type="InterPro" id="IPR025966">
    <property type="entry name" value="OppC_N"/>
</dbReference>
<dbReference type="PANTHER" id="PTHR43386">
    <property type="entry name" value="OLIGOPEPTIDE TRANSPORT SYSTEM PERMEASE PROTEIN APPC"/>
    <property type="match status" value="1"/>
</dbReference>
<dbReference type="PANTHER" id="PTHR43386:SF2">
    <property type="entry name" value="OLIGOPEPTIDE TRANSPORT SYSTEM PERMEASE PROTEIN OPPC"/>
    <property type="match status" value="1"/>
</dbReference>
<dbReference type="Pfam" id="PF00528">
    <property type="entry name" value="BPD_transp_1"/>
    <property type="match status" value="1"/>
</dbReference>
<dbReference type="Pfam" id="PF12911">
    <property type="entry name" value="OppC_N"/>
    <property type="match status" value="1"/>
</dbReference>
<dbReference type="SUPFAM" id="SSF161098">
    <property type="entry name" value="MetI-like"/>
    <property type="match status" value="1"/>
</dbReference>
<dbReference type="PROSITE" id="PS50928">
    <property type="entry name" value="ABC_TM1"/>
    <property type="match status" value="1"/>
</dbReference>
<organism>
    <name type="scientific">Mycobacterium tuberculosis (strain CDC 1551 / Oshkosh)</name>
    <dbReference type="NCBI Taxonomy" id="83331"/>
    <lineage>
        <taxon>Bacteria</taxon>
        <taxon>Bacillati</taxon>
        <taxon>Actinomycetota</taxon>
        <taxon>Actinomycetes</taxon>
        <taxon>Mycobacteriales</taxon>
        <taxon>Mycobacteriaceae</taxon>
        <taxon>Mycobacterium</taxon>
        <taxon>Mycobacterium tuberculosis complex</taxon>
    </lineage>
</organism>
<evidence type="ECO:0000250" key="1">
    <source>
        <dbReference type="UniProtKB" id="P9WFZ9"/>
    </source>
</evidence>
<evidence type="ECO:0000255" key="2"/>
<evidence type="ECO:0000255" key="3">
    <source>
        <dbReference type="PROSITE-ProRule" id="PRU00441"/>
    </source>
</evidence>
<evidence type="ECO:0000305" key="4"/>
<reference key="1">
    <citation type="journal article" date="2002" name="J. Bacteriol.">
        <title>Whole-genome comparison of Mycobacterium tuberculosis clinical and laboratory strains.</title>
        <authorList>
            <person name="Fleischmann R.D."/>
            <person name="Alland D."/>
            <person name="Eisen J.A."/>
            <person name="Carpenter L."/>
            <person name="White O."/>
            <person name="Peterson J.D."/>
            <person name="DeBoy R.T."/>
            <person name="Dodson R.J."/>
            <person name="Gwinn M.L."/>
            <person name="Haft D.H."/>
            <person name="Hickey E.K."/>
            <person name="Kolonay J.F."/>
            <person name="Nelson W.C."/>
            <person name="Umayam L.A."/>
            <person name="Ermolaeva M.D."/>
            <person name="Salzberg S.L."/>
            <person name="Delcher A."/>
            <person name="Utterback T.R."/>
            <person name="Weidman J.F."/>
            <person name="Khouri H.M."/>
            <person name="Gill J."/>
            <person name="Mikula A."/>
            <person name="Bishai W."/>
            <person name="Jacobs W.R. Jr."/>
            <person name="Venter J.C."/>
            <person name="Fraser C.M."/>
        </authorList>
    </citation>
    <scope>NUCLEOTIDE SEQUENCE [LARGE SCALE GENOMIC DNA]</scope>
    <source>
        <strain>CDC 1551 / Oshkosh</strain>
    </source>
</reference>
<sequence>MTEFASRRTLVVRRFLRNRAAVASLAALLLLFVSAYALPPLLPYSYDDLDFNALLQPPGTKHWLGTNALGQDLLAQTLRGMQKSMLIGVCVAVISTGIAATVGAISGYFGGWRDRTLMWVVDLLLVVPSFILIAIVTPRTKNSANIMFLVLLLAGFGWMISSRMVRGMTMSLREREFIRAARYMGVSSRRIIVGHVVPNVASILIIDAALNVAAAILAETGLSFLGFGIQPPDVSLGTLIADGTASATAFPWVFLFPASILVLILVCANLTGDGLRDALDPASRSLRRGVR</sequence>
<name>OPPC_MYCTO</name>
<proteinExistence type="inferred from homology"/>
<feature type="chain" id="PRO_0000428449" description="Oligopeptide transport system permease protein OppC">
    <location>
        <begin position="1"/>
        <end position="291"/>
    </location>
</feature>
<feature type="transmembrane region" description="Helical" evidence="2">
    <location>
        <begin position="22"/>
        <end position="42"/>
    </location>
</feature>
<feature type="transmembrane region" description="Helical" evidence="2">
    <location>
        <begin position="85"/>
        <end position="105"/>
    </location>
</feature>
<feature type="transmembrane region" description="Helical" evidence="2">
    <location>
        <begin position="116"/>
        <end position="136"/>
    </location>
</feature>
<feature type="transmembrane region" description="Helical" evidence="2">
    <location>
        <begin position="142"/>
        <end position="162"/>
    </location>
</feature>
<feature type="transmembrane region" description="Helical" evidence="2">
    <location>
        <begin position="209"/>
        <end position="229"/>
    </location>
</feature>
<feature type="transmembrane region" description="Helical" evidence="2">
    <location>
        <begin position="247"/>
        <end position="267"/>
    </location>
</feature>
<feature type="domain" description="ABC transmembrane type-1" evidence="3">
    <location>
        <begin position="81"/>
        <end position="272"/>
    </location>
</feature>
<comment type="function">
    <text evidence="1">Part of the ABC transporter complex OppABCD involved in the uptake of oligopeptides (By similarity). Responsible for the translocation of the substrate across the membrane (By similarity).</text>
</comment>
<comment type="subunit">
    <text evidence="1">The complex is composed of an ATP-binding protein (OppD), two transmembrane proteins (OppB and OppC) and a solute-binding protein (OppA).</text>
</comment>
<comment type="subcellular location">
    <subcellularLocation>
        <location evidence="1">Cell inner membrane</location>
        <topology evidence="1">Multi-pass membrane protein</topology>
    </subcellularLocation>
</comment>
<comment type="similarity">
    <text evidence="4">Belongs to the binding-protein-dependent transport system permease family. OppBC subfamily.</text>
</comment>
<accession>P9WFZ8</accession>
<accession>L0T965</accession>
<accession>P66964</accession>
<accession>Q10623</accession>
<accession>Q50698</accession>
<gene>
    <name evidence="1" type="primary">oppC</name>
    <name type="ordered locus">MT1319</name>
</gene>
<protein>
    <recommendedName>
        <fullName evidence="1">Oligopeptide transport system permease protein OppC</fullName>
    </recommendedName>
</protein>